<reference key="1">
    <citation type="journal article" date="2009" name="J. Bacteriol.">
        <title>Genome sequence of Azotobacter vinelandii, an obligate aerobe specialized to support diverse anaerobic metabolic processes.</title>
        <authorList>
            <person name="Setubal J.C."/>
            <person name="Dos Santos P."/>
            <person name="Goldman B.S."/>
            <person name="Ertesvaag H."/>
            <person name="Espin G."/>
            <person name="Rubio L.M."/>
            <person name="Valla S."/>
            <person name="Almeida N.F."/>
            <person name="Balasubramanian D."/>
            <person name="Cromes L."/>
            <person name="Curatti L."/>
            <person name="Du Z."/>
            <person name="Godsy E."/>
            <person name="Goodner B."/>
            <person name="Hellner-Burris K."/>
            <person name="Hernandez J.A."/>
            <person name="Houmiel K."/>
            <person name="Imperial J."/>
            <person name="Kennedy C."/>
            <person name="Larson T.J."/>
            <person name="Latreille P."/>
            <person name="Ligon L.S."/>
            <person name="Lu J."/>
            <person name="Maerk M."/>
            <person name="Miller N.M."/>
            <person name="Norton S."/>
            <person name="O'Carroll I.P."/>
            <person name="Paulsen I."/>
            <person name="Raulfs E.C."/>
            <person name="Roemer R."/>
            <person name="Rosser J."/>
            <person name="Segura D."/>
            <person name="Slater S."/>
            <person name="Stricklin S.L."/>
            <person name="Studholme D.J."/>
            <person name="Sun J."/>
            <person name="Viana C.J."/>
            <person name="Wallin E."/>
            <person name="Wang B."/>
            <person name="Wheeler C."/>
            <person name="Zhu H."/>
            <person name="Dean D.R."/>
            <person name="Dixon R."/>
            <person name="Wood D."/>
        </authorList>
    </citation>
    <scope>NUCLEOTIDE SEQUENCE [LARGE SCALE GENOMIC DNA]</scope>
    <source>
        <strain>DJ / ATCC BAA-1303</strain>
    </source>
</reference>
<reference key="2">
    <citation type="journal article" date="2008" name="J. Biol. Chem.">
        <title>Eukaryotic and bacterial gene clusters related to an alternative pathway of nonphosphorylated L-rhamnose metabolism.</title>
        <authorList>
            <person name="Watanabe S."/>
            <person name="Saimura M."/>
            <person name="Makino K."/>
        </authorList>
    </citation>
    <scope>FUNCTION</scope>
    <scope>CATALYTIC ACTIVITY</scope>
    <scope>BIOPHYSICOCHEMICAL PROPERTIES</scope>
    <source>
        <strain>ATCC 478 / DSM 2289 / BCRC 14361 / JCM 21475 / KCTC 12137 / NBRC 102612 / NCIMB 12096 / NRRL B-14641 / VKM B-1617 / NRS 16</strain>
    </source>
</reference>
<reference evidence="9 10 11 12" key="3">
    <citation type="journal article" date="2021" name="FEBS Lett.">
        <title>Crystal structure of l-rhamnose 1-dehydrogenase involved in the nonphosphorylative pathway of l-rhamnose metabolism in bacteria.</title>
        <authorList>
            <person name="Yoshiwara K."/>
            <person name="Watanabe S."/>
            <person name="Watanabe Y."/>
        </authorList>
    </citation>
    <scope>X-RAY CRYSTALLOGRAPHY (1.57 ANGSTROMS) OF 2-256 OF APOENZYME AND IN COMPLEXES WITH NAD(+); NADP(+) AND L-RHAMNOSE</scope>
    <scope>FUNCTION</scope>
    <scope>CATALYTIC ACTIVITY</scope>
    <scope>BIOPHYSICOCHEMICAL PROPERTIES</scope>
    <scope>MUTAGENESIS OF ARG-15; SER-37; PHE-99; GLN-156; THR-191; ILE-196 AND ASP-200</scope>
</reference>
<evidence type="ECO:0000250" key="1">
    <source>
        <dbReference type="UniProtKB" id="O93868"/>
    </source>
</evidence>
<evidence type="ECO:0000269" key="2">
    <source>
    </source>
</evidence>
<evidence type="ECO:0000269" key="3">
    <source>
    </source>
</evidence>
<evidence type="ECO:0000303" key="4">
    <source>
    </source>
</evidence>
<evidence type="ECO:0000303" key="5">
    <source>
    </source>
</evidence>
<evidence type="ECO:0000305" key="6"/>
<evidence type="ECO:0000305" key="7">
    <source>
    </source>
</evidence>
<evidence type="ECO:0000312" key="8">
    <source>
        <dbReference type="EMBL" id="ACO77155.1"/>
    </source>
</evidence>
<evidence type="ECO:0007744" key="9">
    <source>
        <dbReference type="PDB" id="7B81"/>
    </source>
</evidence>
<evidence type="ECO:0007744" key="10">
    <source>
        <dbReference type="PDB" id="7DO5"/>
    </source>
</evidence>
<evidence type="ECO:0007744" key="11">
    <source>
        <dbReference type="PDB" id="7DO6"/>
    </source>
</evidence>
<evidence type="ECO:0007744" key="12">
    <source>
        <dbReference type="PDB" id="7DO7"/>
    </source>
</evidence>
<evidence type="ECO:0007829" key="13">
    <source>
        <dbReference type="PDB" id="7DO6"/>
    </source>
</evidence>
<evidence type="ECO:0007829" key="14">
    <source>
        <dbReference type="PDB" id="7DO7"/>
    </source>
</evidence>
<accession>C1DMX5</accession>
<organism>
    <name type="scientific">Azotobacter vinelandii (strain DJ / ATCC BAA-1303)</name>
    <dbReference type="NCBI Taxonomy" id="322710"/>
    <lineage>
        <taxon>Bacteria</taxon>
        <taxon>Pseudomonadati</taxon>
        <taxon>Pseudomonadota</taxon>
        <taxon>Gammaproteobacteria</taxon>
        <taxon>Pseudomonadales</taxon>
        <taxon>Pseudomonadaceae</taxon>
        <taxon>Azotobacter</taxon>
    </lineage>
</organism>
<proteinExistence type="evidence at protein level"/>
<sequence length="256" mass="26420">MLLIDKTVIVTGASRGIGRAAARECARQGARVVIGHSGSDEGRAGALSLAEEIAAFGGTAIAVGADAADLDSGEKLVAAAVEAFGSVDVLVNNAGICPFHSFLDMPRELYLKTVGTNLNGAYFTVQAAARRMKEQGRGGAIIAVSSISALVGGAMQTHYTPTKAGLLSLMQSCAIALGPYGIRCNAVLPGTIATDINKEDLSDLEKRERMTSRVPLGRLGEPDDLAGPIVFLASDMARYVTGASLLVDGGLFVNLQ</sequence>
<protein>
    <recommendedName>
        <fullName evidence="4 5">L-rhamnose 1-dehydrogenase (NAD(P)(+))</fullName>
        <shortName evidence="5">RhaDH</shortName>
        <ecNumber evidence="2 3">1.1.1.378</ecNumber>
    </recommendedName>
    <alternativeName>
        <fullName evidence="4">AvLRA1</fullName>
    </alternativeName>
</protein>
<feature type="chain" id="PRO_0000461191" description="L-rhamnose 1-dehydrogenase (NAD(P)(+))">
    <location>
        <begin position="1"/>
        <end position="256"/>
    </location>
</feature>
<feature type="active site" description="Proton donor" evidence="1">
    <location>
        <position position="146"/>
    </location>
</feature>
<feature type="active site" description="Proton acceptor" evidence="1">
    <location>
        <position position="159"/>
    </location>
</feature>
<feature type="active site" description="Lowers pKa of active site Tyr" evidence="1">
    <location>
        <position position="163"/>
    </location>
</feature>
<feature type="binding site" evidence="3 9 11 12">
    <location>
        <position position="12"/>
    </location>
    <ligand>
        <name>NADP(+)</name>
        <dbReference type="ChEBI" id="CHEBI:58349"/>
    </ligand>
</feature>
<feature type="binding site" evidence="3 9 11 12">
    <location>
        <position position="14"/>
    </location>
    <ligand>
        <name>NADP(+)</name>
        <dbReference type="ChEBI" id="CHEBI:58349"/>
    </ligand>
</feature>
<feature type="binding site" evidence="3 9 11 12">
    <location>
        <position position="15"/>
    </location>
    <ligand>
        <name>NADP(+)</name>
        <dbReference type="ChEBI" id="CHEBI:58349"/>
    </ligand>
</feature>
<feature type="binding site" evidence="3 9 11 12">
    <location>
        <position position="17"/>
    </location>
    <ligand>
        <name>NADP(+)</name>
        <dbReference type="ChEBI" id="CHEBI:58349"/>
    </ligand>
</feature>
<feature type="binding site" evidence="3 11">
    <location>
        <position position="37"/>
    </location>
    <ligand>
        <name>NADP(+)</name>
        <dbReference type="ChEBI" id="CHEBI:58349"/>
    </ligand>
</feature>
<feature type="binding site" evidence="3 9 11 12">
    <location>
        <position position="66"/>
    </location>
    <ligand>
        <name>NADP(+)</name>
        <dbReference type="ChEBI" id="CHEBI:58349"/>
    </ligand>
</feature>
<feature type="binding site" evidence="3 9 11 12">
    <location>
        <position position="67"/>
    </location>
    <ligand>
        <name>NADP(+)</name>
        <dbReference type="ChEBI" id="CHEBI:58349"/>
    </ligand>
</feature>
<feature type="binding site" evidence="3 9 11 12">
    <location>
        <position position="93"/>
    </location>
    <ligand>
        <name>NADP(+)</name>
        <dbReference type="ChEBI" id="CHEBI:58349"/>
    </ligand>
</feature>
<feature type="binding site" evidence="3 12">
    <location>
        <position position="146"/>
    </location>
    <ligand>
        <name>beta-L-rhamnose</name>
        <dbReference type="ChEBI" id="CHEBI:27586"/>
    </ligand>
</feature>
<feature type="binding site" evidence="3 12">
    <location>
        <position position="148"/>
    </location>
    <ligand>
        <name>beta-L-rhamnose</name>
        <dbReference type="ChEBI" id="CHEBI:27586"/>
    </ligand>
</feature>
<feature type="binding site" evidence="3 12">
    <location>
        <position position="156"/>
    </location>
    <ligand>
        <name>beta-L-rhamnose</name>
        <dbReference type="ChEBI" id="CHEBI:27586"/>
    </ligand>
</feature>
<feature type="binding site" evidence="3 12">
    <location>
        <position position="159"/>
    </location>
    <ligand>
        <name>beta-L-rhamnose</name>
        <dbReference type="ChEBI" id="CHEBI:27586"/>
    </ligand>
</feature>
<feature type="binding site" evidence="3 9 11 12">
    <location>
        <position position="159"/>
    </location>
    <ligand>
        <name>NADP(+)</name>
        <dbReference type="ChEBI" id="CHEBI:58349"/>
    </ligand>
</feature>
<feature type="binding site" evidence="3 9 11 12">
    <location>
        <position position="163"/>
    </location>
    <ligand>
        <name>NADP(+)</name>
        <dbReference type="ChEBI" id="CHEBI:58349"/>
    </ligand>
</feature>
<feature type="binding site" evidence="3 12">
    <location>
        <position position="191"/>
    </location>
    <ligand>
        <name>beta-L-rhamnose</name>
        <dbReference type="ChEBI" id="CHEBI:27586"/>
    </ligand>
</feature>
<feature type="binding site" evidence="3 9 11 12">
    <location>
        <position position="192"/>
    </location>
    <ligand>
        <name>NADP(+)</name>
        <dbReference type="ChEBI" id="CHEBI:58349"/>
    </ligand>
</feature>
<feature type="binding site" evidence="3 12">
    <location>
        <position position="197"/>
    </location>
    <ligand>
        <name>beta-L-rhamnose</name>
        <dbReference type="ChEBI" id="CHEBI:27586"/>
    </ligand>
</feature>
<feature type="mutagenesis site" description="Increases specificity toward NAD(+). Shows a strong decrease in catalytic efficiency with NADP(+)." evidence="3">
    <original>R</original>
    <variation>T</variation>
    <location>
        <position position="15"/>
    </location>
</feature>
<feature type="mutagenesis site" description="Increases specificity toward NAD(+). Shows a strong decrease in catalytic efficiency with NADP(+) and an increase in catalytic efficiency with NAD(+)." evidence="3">
    <original>S</original>
    <variation>H</variation>
    <location>
        <position position="37"/>
    </location>
</feature>
<feature type="mutagenesis site" description="Shows a strong decrease in catalytic efficiency with L-rhamnose, L-lyxose and L-mannose." evidence="3">
    <original>F</original>
    <variation>A</variation>
    <variation>Y</variation>
    <location>
        <position position="99"/>
    </location>
</feature>
<feature type="mutagenesis site" description="Almost loss of activity with L-rhamnose as substrate." evidence="3">
    <original>Q</original>
    <variation>A</variation>
    <location>
        <position position="156"/>
    </location>
</feature>
<feature type="mutagenesis site" description="Retains 4% of wild-type activity with L-rhamnose as substrate." evidence="3">
    <original>T</original>
    <variation>F</variation>
    <location>
        <position position="191"/>
    </location>
</feature>
<feature type="mutagenesis site" description="Shows a strong decrease in catalytic efficiency with L-rhamnose as substrate, but does not affect catalytic efficiency with L-lyxose and L-mannose." evidence="3">
    <original>I</original>
    <variation>A</variation>
    <location>
        <position position="196"/>
    </location>
</feature>
<feature type="mutagenesis site" description="Retains 16% of wild-type activity with L-rhamnose as substrate." evidence="3">
    <original>D</original>
    <variation>A</variation>
    <location>
        <position position="200"/>
    </location>
</feature>
<feature type="mutagenesis site" description="Retains 22% of wild-type activity with L-rhamnose as substrate." evidence="3">
    <original>D</original>
    <variation>H</variation>
    <location>
        <position position="200"/>
    </location>
</feature>
<feature type="turn" evidence="14">
    <location>
        <begin position="2"/>
        <end position="5"/>
    </location>
</feature>
<feature type="strand" evidence="14">
    <location>
        <begin position="7"/>
        <end position="10"/>
    </location>
</feature>
<feature type="helix" evidence="14">
    <location>
        <begin position="16"/>
        <end position="27"/>
    </location>
</feature>
<feature type="strand" evidence="14">
    <location>
        <begin position="31"/>
        <end position="36"/>
    </location>
</feature>
<feature type="helix" evidence="14">
    <location>
        <begin position="40"/>
        <end position="55"/>
    </location>
</feature>
<feature type="strand" evidence="14">
    <location>
        <begin position="59"/>
        <end position="64"/>
    </location>
</feature>
<feature type="strand" evidence="13">
    <location>
        <begin position="67"/>
        <end position="69"/>
    </location>
</feature>
<feature type="helix" evidence="14">
    <location>
        <begin position="72"/>
        <end position="84"/>
    </location>
</feature>
<feature type="strand" evidence="14">
    <location>
        <begin position="89"/>
        <end position="92"/>
    </location>
</feature>
<feature type="helix" evidence="14">
    <location>
        <begin position="107"/>
        <end position="117"/>
    </location>
</feature>
<feature type="helix" evidence="14">
    <location>
        <begin position="119"/>
        <end position="135"/>
    </location>
</feature>
<feature type="strand" evidence="14">
    <location>
        <begin position="139"/>
        <end position="144"/>
    </location>
</feature>
<feature type="helix" evidence="14">
    <location>
        <begin position="147"/>
        <end position="149"/>
    </location>
</feature>
<feature type="helix" evidence="14">
    <location>
        <begin position="154"/>
        <end position="156"/>
    </location>
</feature>
<feature type="turn" evidence="14">
    <location>
        <begin position="157"/>
        <end position="159"/>
    </location>
</feature>
<feature type="helix" evidence="14">
    <location>
        <begin position="160"/>
        <end position="177"/>
    </location>
</feature>
<feature type="helix" evidence="14">
    <location>
        <begin position="178"/>
        <end position="180"/>
    </location>
</feature>
<feature type="strand" evidence="14">
    <location>
        <begin position="182"/>
        <end position="189"/>
    </location>
</feature>
<feature type="helix" evidence="14">
    <location>
        <begin position="195"/>
        <end position="197"/>
    </location>
</feature>
<feature type="helix" evidence="14">
    <location>
        <begin position="200"/>
        <end position="202"/>
    </location>
</feature>
<feature type="helix" evidence="14">
    <location>
        <begin position="204"/>
        <end position="212"/>
    </location>
</feature>
<feature type="helix" evidence="14">
    <location>
        <begin position="223"/>
        <end position="233"/>
    </location>
</feature>
<feature type="helix" evidence="14">
    <location>
        <begin position="235"/>
        <end position="237"/>
    </location>
</feature>
<feature type="strand" evidence="14">
    <location>
        <begin position="244"/>
        <end position="248"/>
    </location>
</feature>
<feature type="turn" evidence="14">
    <location>
        <begin position="249"/>
        <end position="253"/>
    </location>
</feature>
<name>RHAD_AZOVD</name>
<keyword id="KW-0002">3D-structure</keyword>
<keyword id="KW-0520">NAD</keyword>
<keyword id="KW-0521">NADP</keyword>
<keyword id="KW-0547">Nucleotide-binding</keyword>
<keyword id="KW-0560">Oxidoreductase</keyword>
<keyword id="KW-0684">Rhamnose metabolism</keyword>
<gene>
    <name evidence="4" type="primary">LRA1</name>
    <name evidence="8" type="ordered locus">Avin_09160</name>
</gene>
<comment type="function">
    <text evidence="2 3">NAD(P)-dependent dehydrogenase that catalyzes the oxidation of L-rhamnose to L-rhamnono-1,4-lactone (PubMed:18505728, PubMed:33482017). Also shows high activity with L-lyxose and low activity with L-mannose and L-fucose (PubMed:18505728, PubMed:33482017). Can utilize either NAD(+) or NADP(+), with a strong preference for NADP(+) (PubMed:18505728, PubMed:33482017). Catalyzes the first step in an alternative pathway for rhamnose utilization that does not involve phosphorylated intermediates (PubMed:18505728).</text>
</comment>
<comment type="catalytic activity">
    <reaction evidence="2 3">
        <text>L-rhamnofuranose + NAD(+) = L-rhamnono-1,4-lactone + NADH + H(+)</text>
        <dbReference type="Rhea" id="RHEA:12649"/>
        <dbReference type="ChEBI" id="CHEBI:15378"/>
        <dbReference type="ChEBI" id="CHEBI:16935"/>
        <dbReference type="ChEBI" id="CHEBI:17937"/>
        <dbReference type="ChEBI" id="CHEBI:57540"/>
        <dbReference type="ChEBI" id="CHEBI:57945"/>
        <dbReference type="EC" id="1.1.1.378"/>
    </reaction>
    <physiologicalReaction direction="left-to-right" evidence="2">
        <dbReference type="Rhea" id="RHEA:12650"/>
    </physiologicalReaction>
</comment>
<comment type="catalytic activity">
    <reaction evidence="2 3">
        <text>L-rhamnofuranose + NADP(+) = L-rhamnono-1,4-lactone + NADPH + H(+)</text>
        <dbReference type="Rhea" id="RHEA:42668"/>
        <dbReference type="ChEBI" id="CHEBI:15378"/>
        <dbReference type="ChEBI" id="CHEBI:16935"/>
        <dbReference type="ChEBI" id="CHEBI:17937"/>
        <dbReference type="ChEBI" id="CHEBI:57783"/>
        <dbReference type="ChEBI" id="CHEBI:58349"/>
        <dbReference type="EC" id="1.1.1.378"/>
    </reaction>
    <physiologicalReaction direction="left-to-right" evidence="2">
        <dbReference type="Rhea" id="RHEA:42669"/>
    </physiologicalReaction>
</comment>
<comment type="biophysicochemical properties">
    <kinetics>
        <KM evidence="2">2.61 mM for L-rhamnose (in the presence of NAD(+))</KM>
        <KM evidence="2">2.34 mM for L-rhamnose (in the presence of NADP(+))</KM>
        <KM evidence="3">2.23 mM for L-rhamnose</KM>
        <KM evidence="2">8.43 mM for L-lyxose (in the presence of NAD(+))</KM>
        <KM evidence="2">4.96 mM for L-lyxose (in the presence of NADP(+))</KM>
        <KM evidence="3">4.82 mM for L-lyxose</KM>
        <KM evidence="2">108 mM for L-mannose (in the presence of NAD(+))</KM>
        <KM evidence="2">89.3 mM for L-mannose (in the presence of NADP(+))</KM>
        <KM evidence="3">148 mM for L-mannose</KM>
        <KM evidence="2">673 mM for L-fucose (in the presence of NAD(+))</KM>
        <KM evidence="2">582 mM for L-fucose (in the presence of NADP(+))</KM>
        <KM evidence="3">1.81 mM for NAD(+)</KM>
        <KM evidence="3">0.194 mM for NADP(+)</KM>
        <text evidence="2 3">kcat is 2230 min(-1) with L-rhamnose as substrate (in the presence of NAD(+)) (PubMed:18505728). kcat is 4490 min(-1) with L-rhamnose as substrate (in the presence of NADP(+)) (PubMed:18505728). kcat is 5010 min(-1) with L-rhamnose as substrate (PubMed:33482017). kcat is 2480 min(-1) with L-lyxose as substrate (in the presence of NAD(+)) (PubMed:18505728). kcat is 4780 min(-1) with L-lyxose as substrate (in the presence of NADP(+)) (PubMed:18505728). kcat is 5120 min(-1) with L-lyxose as substrate (PubMed:33482017). kcat is 565 min(-1) with L-mannose as substrate (in the presence of NAD(+)) (PubMed:18505728). kcat is 1020 min(-1) with L-mannose as substrate (in the presence of NADP(+)) (PubMed:18505728). kcat is 2780 min(-1) with L-mannose as substrate (PubMed:33482017). kcat is 289 min(-1) with L-fucose as substrate (in the presence of NAD(+)) (PubMed:18505728). kcat is 550 min(-1) with L-fucose as substrate (in the presence of NADP(+)) (PubMed:18505728). kcat is 3960 min(-1) with NAD(+) as substrate (PubMed:33482017). kcat is 7840 min(-1) with NADP(+) as substrate (PubMed:33482017).</text>
    </kinetics>
</comment>
<comment type="pathway">
    <text evidence="7">Carbohydrate degradation; L-rhamnose degradation.</text>
</comment>
<comment type="similarity">
    <text evidence="6">Belongs to the short-chain dehydrogenases/reductases (SDR) family.</text>
</comment>
<dbReference type="EC" id="1.1.1.378" evidence="2 3"/>
<dbReference type="EMBL" id="CP001157">
    <property type="protein sequence ID" value="ACO77155.1"/>
    <property type="molecule type" value="Genomic_DNA"/>
</dbReference>
<dbReference type="RefSeq" id="WP_012699580.1">
    <property type="nucleotide sequence ID" value="NC_012560.1"/>
</dbReference>
<dbReference type="PDB" id="7B81">
    <property type="method" value="X-ray"/>
    <property type="resolution" value="2.09 A"/>
    <property type="chains" value="A/B=2-256"/>
</dbReference>
<dbReference type="PDB" id="7DO5">
    <property type="method" value="X-ray"/>
    <property type="resolution" value="1.84 A"/>
    <property type="chains" value="A/B/C/D/E/F/G/H=2-256"/>
</dbReference>
<dbReference type="PDB" id="7DO6">
    <property type="method" value="X-ray"/>
    <property type="resolution" value="2.37 A"/>
    <property type="chains" value="A/B/C/D/E/F/G/H=2-256"/>
</dbReference>
<dbReference type="PDB" id="7DO7">
    <property type="method" value="X-ray"/>
    <property type="resolution" value="1.57 A"/>
    <property type="chains" value="A/B=2-256"/>
</dbReference>
<dbReference type="PDBsum" id="7B81"/>
<dbReference type="PDBsum" id="7DO5"/>
<dbReference type="PDBsum" id="7DO6"/>
<dbReference type="PDBsum" id="7DO7"/>
<dbReference type="SMR" id="C1DMX5"/>
<dbReference type="STRING" id="322710.Avin_09160"/>
<dbReference type="EnsemblBacteria" id="ACO77155">
    <property type="protein sequence ID" value="ACO77155"/>
    <property type="gene ID" value="Avin_09160"/>
</dbReference>
<dbReference type="GeneID" id="88184286"/>
<dbReference type="KEGG" id="avn:Avin_09160"/>
<dbReference type="eggNOG" id="COG1028">
    <property type="taxonomic scope" value="Bacteria"/>
</dbReference>
<dbReference type="HOGENOM" id="CLU_010194_1_1_6"/>
<dbReference type="OrthoDB" id="286404at2"/>
<dbReference type="BioCyc" id="MetaCyc:MONOMER-16230"/>
<dbReference type="UniPathway" id="UPA00541"/>
<dbReference type="Proteomes" id="UP000002424">
    <property type="component" value="Chromosome"/>
</dbReference>
<dbReference type="GO" id="GO:0000166">
    <property type="term" value="F:nucleotide binding"/>
    <property type="evidence" value="ECO:0007669"/>
    <property type="project" value="UniProtKB-KW"/>
</dbReference>
<dbReference type="GO" id="GO:0016616">
    <property type="term" value="F:oxidoreductase activity, acting on the CH-OH group of donors, NAD or NADP as acceptor"/>
    <property type="evidence" value="ECO:0007669"/>
    <property type="project" value="TreeGrafter"/>
</dbReference>
<dbReference type="GO" id="GO:0048038">
    <property type="term" value="F:quinone binding"/>
    <property type="evidence" value="ECO:0007669"/>
    <property type="project" value="TreeGrafter"/>
</dbReference>
<dbReference type="GO" id="GO:0006633">
    <property type="term" value="P:fatty acid biosynthetic process"/>
    <property type="evidence" value="ECO:0007669"/>
    <property type="project" value="TreeGrafter"/>
</dbReference>
<dbReference type="GO" id="GO:0019299">
    <property type="term" value="P:rhamnose metabolic process"/>
    <property type="evidence" value="ECO:0007669"/>
    <property type="project" value="UniProtKB-KW"/>
</dbReference>
<dbReference type="FunFam" id="3.40.50.720:FF:000417">
    <property type="entry name" value="Glucose 1-dehydrogenase, putative"/>
    <property type="match status" value="1"/>
</dbReference>
<dbReference type="Gene3D" id="3.40.50.720">
    <property type="entry name" value="NAD(P)-binding Rossmann-like Domain"/>
    <property type="match status" value="1"/>
</dbReference>
<dbReference type="InterPro" id="IPR036291">
    <property type="entry name" value="NAD(P)-bd_dom_sf"/>
</dbReference>
<dbReference type="InterPro" id="IPR002347">
    <property type="entry name" value="SDR_fam"/>
</dbReference>
<dbReference type="NCBIfam" id="NF005559">
    <property type="entry name" value="PRK07231.1"/>
    <property type="match status" value="1"/>
</dbReference>
<dbReference type="PANTHER" id="PTHR42760:SF83">
    <property type="entry name" value="(3R)-3-HYDROXYACYL-COA DEHYDROGENASE"/>
    <property type="match status" value="1"/>
</dbReference>
<dbReference type="PANTHER" id="PTHR42760">
    <property type="entry name" value="SHORT-CHAIN DEHYDROGENASES/REDUCTASES FAMILY MEMBER"/>
    <property type="match status" value="1"/>
</dbReference>
<dbReference type="Pfam" id="PF13561">
    <property type="entry name" value="adh_short_C2"/>
    <property type="match status" value="1"/>
</dbReference>
<dbReference type="PRINTS" id="PR00081">
    <property type="entry name" value="GDHRDH"/>
</dbReference>
<dbReference type="PRINTS" id="PR00080">
    <property type="entry name" value="SDRFAMILY"/>
</dbReference>
<dbReference type="SMART" id="SM00822">
    <property type="entry name" value="PKS_KR"/>
    <property type="match status" value="1"/>
</dbReference>
<dbReference type="SUPFAM" id="SSF51735">
    <property type="entry name" value="NAD(P)-binding Rossmann-fold domains"/>
    <property type="match status" value="1"/>
</dbReference>